<dbReference type="EC" id="1.1.1.37" evidence="1"/>
<dbReference type="EMBL" id="CP001600">
    <property type="protein sequence ID" value="ACR67684.1"/>
    <property type="molecule type" value="Genomic_DNA"/>
</dbReference>
<dbReference type="RefSeq" id="WP_015869887.1">
    <property type="nucleotide sequence ID" value="NZ_CP169062.1"/>
</dbReference>
<dbReference type="SMR" id="C5BF98"/>
<dbReference type="STRING" id="67780.B6E78_12990"/>
<dbReference type="GeneID" id="69537533"/>
<dbReference type="KEGG" id="eic:NT01EI_0446"/>
<dbReference type="PATRIC" id="fig|634503.3.peg.405"/>
<dbReference type="HOGENOM" id="CLU_047181_0_1_6"/>
<dbReference type="OrthoDB" id="9802969at2"/>
<dbReference type="PHI-base" id="PHI:2959"/>
<dbReference type="Proteomes" id="UP000001485">
    <property type="component" value="Chromosome"/>
</dbReference>
<dbReference type="GO" id="GO:0005737">
    <property type="term" value="C:cytoplasm"/>
    <property type="evidence" value="ECO:0007669"/>
    <property type="project" value="TreeGrafter"/>
</dbReference>
<dbReference type="GO" id="GO:0030060">
    <property type="term" value="F:L-malate dehydrogenase (NAD+) activity"/>
    <property type="evidence" value="ECO:0007669"/>
    <property type="project" value="UniProtKB-UniRule"/>
</dbReference>
<dbReference type="GO" id="GO:0006108">
    <property type="term" value="P:malate metabolic process"/>
    <property type="evidence" value="ECO:0007669"/>
    <property type="project" value="InterPro"/>
</dbReference>
<dbReference type="GO" id="GO:0006099">
    <property type="term" value="P:tricarboxylic acid cycle"/>
    <property type="evidence" value="ECO:0007669"/>
    <property type="project" value="UniProtKB-UniRule"/>
</dbReference>
<dbReference type="CDD" id="cd01337">
    <property type="entry name" value="MDH_glyoxysomal_mitochondrial"/>
    <property type="match status" value="1"/>
</dbReference>
<dbReference type="FunFam" id="3.40.50.720:FF:000017">
    <property type="entry name" value="Malate dehydrogenase"/>
    <property type="match status" value="1"/>
</dbReference>
<dbReference type="FunFam" id="3.90.110.10:FF:000001">
    <property type="entry name" value="Malate dehydrogenase"/>
    <property type="match status" value="1"/>
</dbReference>
<dbReference type="Gene3D" id="3.90.110.10">
    <property type="entry name" value="Lactate dehydrogenase/glycoside hydrolase, family 4, C-terminal"/>
    <property type="match status" value="1"/>
</dbReference>
<dbReference type="Gene3D" id="3.40.50.720">
    <property type="entry name" value="NAD(P)-binding Rossmann-like Domain"/>
    <property type="match status" value="1"/>
</dbReference>
<dbReference type="HAMAP" id="MF_01516">
    <property type="entry name" value="Malate_dehydrog_1"/>
    <property type="match status" value="1"/>
</dbReference>
<dbReference type="InterPro" id="IPR001557">
    <property type="entry name" value="L-lactate/malate_DH"/>
</dbReference>
<dbReference type="InterPro" id="IPR022383">
    <property type="entry name" value="Lactate/malate_DH_C"/>
</dbReference>
<dbReference type="InterPro" id="IPR001236">
    <property type="entry name" value="Lactate/malate_DH_N"/>
</dbReference>
<dbReference type="InterPro" id="IPR015955">
    <property type="entry name" value="Lactate_DH/Glyco_Ohase_4_C"/>
</dbReference>
<dbReference type="InterPro" id="IPR001252">
    <property type="entry name" value="Malate_DH_AS"/>
</dbReference>
<dbReference type="InterPro" id="IPR010097">
    <property type="entry name" value="Malate_DH_type1"/>
</dbReference>
<dbReference type="InterPro" id="IPR023958">
    <property type="entry name" value="Malate_DH_type1_bac"/>
</dbReference>
<dbReference type="InterPro" id="IPR036291">
    <property type="entry name" value="NAD(P)-bd_dom_sf"/>
</dbReference>
<dbReference type="NCBIfam" id="TIGR01772">
    <property type="entry name" value="MDH_euk_gproteo"/>
    <property type="match status" value="1"/>
</dbReference>
<dbReference type="PANTHER" id="PTHR11540">
    <property type="entry name" value="MALATE AND LACTATE DEHYDROGENASE"/>
    <property type="match status" value="1"/>
</dbReference>
<dbReference type="PANTHER" id="PTHR11540:SF16">
    <property type="entry name" value="MALATE DEHYDROGENASE, MITOCHONDRIAL"/>
    <property type="match status" value="1"/>
</dbReference>
<dbReference type="Pfam" id="PF02866">
    <property type="entry name" value="Ldh_1_C"/>
    <property type="match status" value="1"/>
</dbReference>
<dbReference type="Pfam" id="PF00056">
    <property type="entry name" value="Ldh_1_N"/>
    <property type="match status" value="1"/>
</dbReference>
<dbReference type="PIRSF" id="PIRSF000102">
    <property type="entry name" value="Lac_mal_DH"/>
    <property type="match status" value="1"/>
</dbReference>
<dbReference type="SUPFAM" id="SSF56327">
    <property type="entry name" value="LDH C-terminal domain-like"/>
    <property type="match status" value="1"/>
</dbReference>
<dbReference type="SUPFAM" id="SSF51735">
    <property type="entry name" value="NAD(P)-binding Rossmann-fold domains"/>
    <property type="match status" value="1"/>
</dbReference>
<dbReference type="PROSITE" id="PS00068">
    <property type="entry name" value="MDH"/>
    <property type="match status" value="1"/>
</dbReference>
<keyword id="KW-0520">NAD</keyword>
<keyword id="KW-0560">Oxidoreductase</keyword>
<keyword id="KW-0816">Tricarboxylic acid cycle</keyword>
<proteinExistence type="inferred from homology"/>
<organism>
    <name type="scientific">Edwardsiella ictaluri (strain 93-146)</name>
    <dbReference type="NCBI Taxonomy" id="634503"/>
    <lineage>
        <taxon>Bacteria</taxon>
        <taxon>Pseudomonadati</taxon>
        <taxon>Pseudomonadota</taxon>
        <taxon>Gammaproteobacteria</taxon>
        <taxon>Enterobacterales</taxon>
        <taxon>Hafniaceae</taxon>
        <taxon>Edwardsiella</taxon>
    </lineage>
</organism>
<comment type="function">
    <text evidence="1">Catalyzes the reversible oxidation of malate to oxaloacetate.</text>
</comment>
<comment type="catalytic activity">
    <reaction evidence="1">
        <text>(S)-malate + NAD(+) = oxaloacetate + NADH + H(+)</text>
        <dbReference type="Rhea" id="RHEA:21432"/>
        <dbReference type="ChEBI" id="CHEBI:15378"/>
        <dbReference type="ChEBI" id="CHEBI:15589"/>
        <dbReference type="ChEBI" id="CHEBI:16452"/>
        <dbReference type="ChEBI" id="CHEBI:57540"/>
        <dbReference type="ChEBI" id="CHEBI:57945"/>
        <dbReference type="EC" id="1.1.1.37"/>
    </reaction>
</comment>
<comment type="subunit">
    <text evidence="1">Homodimer.</text>
</comment>
<comment type="similarity">
    <text evidence="1">Belongs to the LDH/MDH superfamily. MDH type 1 family.</text>
</comment>
<sequence length="312" mass="32348">MKVAVLGAAGGIGQALALLLKTQLPSGSELSLYDIAPVTPGVAVDLSHIPTAVKVCGFGGEDASPALVGADIVLISAGVARKPGMDRSDLFNVNAGIIRNLIGQVARTSPNACIGIITNPVNTMVPIAAEVLKKAGVYNPNKLFGVTTLDIIRSNTFVGELKHLDPATLDIPVIGGHSGVTILPLLSQIPGVSLSEREVAELTKRIQNAGTEVVEAKAGGGSATLAMGQAAARFALSLVRAMQGDENVVECGYVESDGEYARFFAQPLLLGKAGLVQRLSIGTLSAFEQDALESMLEVLRKDIALGEDFINK</sequence>
<gene>
    <name evidence="1" type="primary">mdh</name>
    <name type="ordered locus">NT01EI_0446</name>
</gene>
<reference key="1">
    <citation type="submission" date="2009-03" db="EMBL/GenBank/DDBJ databases">
        <title>Complete genome sequence of Edwardsiella ictaluri 93-146.</title>
        <authorList>
            <person name="Williams M.L."/>
            <person name="Gillaspy A.F."/>
            <person name="Dyer D.W."/>
            <person name="Thune R.L."/>
            <person name="Waldbieser G.C."/>
            <person name="Schuster S.C."/>
            <person name="Gipson J."/>
            <person name="Zaitshik J."/>
            <person name="Landry C."/>
            <person name="Lawrence M.L."/>
        </authorList>
    </citation>
    <scope>NUCLEOTIDE SEQUENCE [LARGE SCALE GENOMIC DNA]</scope>
    <source>
        <strain>93-146</strain>
    </source>
</reference>
<accession>C5BF98</accession>
<feature type="chain" id="PRO_1000215353" description="Malate dehydrogenase">
    <location>
        <begin position="1"/>
        <end position="312"/>
    </location>
</feature>
<feature type="active site" description="Proton acceptor" evidence="1">
    <location>
        <position position="177"/>
    </location>
</feature>
<feature type="binding site" evidence="1">
    <location>
        <begin position="7"/>
        <end position="13"/>
    </location>
    <ligand>
        <name>NAD(+)</name>
        <dbReference type="ChEBI" id="CHEBI:57540"/>
    </ligand>
</feature>
<feature type="binding site" evidence="1">
    <location>
        <position position="34"/>
    </location>
    <ligand>
        <name>NAD(+)</name>
        <dbReference type="ChEBI" id="CHEBI:57540"/>
    </ligand>
</feature>
<feature type="binding site" evidence="1">
    <location>
        <position position="81"/>
    </location>
    <ligand>
        <name>substrate</name>
    </ligand>
</feature>
<feature type="binding site" evidence="1">
    <location>
        <position position="87"/>
    </location>
    <ligand>
        <name>substrate</name>
    </ligand>
</feature>
<feature type="binding site" evidence="1">
    <location>
        <position position="94"/>
    </location>
    <ligand>
        <name>NAD(+)</name>
        <dbReference type="ChEBI" id="CHEBI:57540"/>
    </ligand>
</feature>
<feature type="binding site" evidence="1">
    <location>
        <begin position="117"/>
        <end position="119"/>
    </location>
    <ligand>
        <name>NAD(+)</name>
        <dbReference type="ChEBI" id="CHEBI:57540"/>
    </ligand>
</feature>
<feature type="binding site" evidence="1">
    <location>
        <position position="119"/>
    </location>
    <ligand>
        <name>substrate</name>
    </ligand>
</feature>
<feature type="binding site" evidence="1">
    <location>
        <position position="153"/>
    </location>
    <ligand>
        <name>substrate</name>
    </ligand>
</feature>
<feature type="binding site" evidence="1">
    <location>
        <position position="227"/>
    </location>
    <ligand>
        <name>NAD(+)</name>
        <dbReference type="ChEBI" id="CHEBI:57540"/>
    </ligand>
</feature>
<evidence type="ECO:0000255" key="1">
    <source>
        <dbReference type="HAMAP-Rule" id="MF_01516"/>
    </source>
</evidence>
<protein>
    <recommendedName>
        <fullName evidence="1">Malate dehydrogenase</fullName>
        <ecNumber evidence="1">1.1.1.37</ecNumber>
    </recommendedName>
</protein>
<name>MDH_EDWI9</name>